<comment type="similarity">
    <text evidence="2">Belongs to the HIBADH-related family.</text>
</comment>
<comment type="sequence caution" evidence="2">
    <conflict type="erroneous initiation">
        <sequence resource="EMBL-CDS" id="BAA23388"/>
    </conflict>
</comment>
<comment type="sequence caution" evidence="2">
    <conflict type="erroneous initiation">
        <sequence resource="EMBL-CDS" id="BAA24303"/>
    </conflict>
</comment>
<feature type="chain" id="PRO_0000173067" description="Uncharacterized oxidoreductase YfjR">
    <location>
        <begin position="1"/>
        <end position="286"/>
    </location>
</feature>
<feature type="active site" evidence="1">
    <location>
        <position position="171"/>
    </location>
</feature>
<feature type="binding site" evidence="1">
    <location>
        <begin position="4"/>
        <end position="18"/>
    </location>
    <ligand>
        <name>NAD(+)</name>
        <dbReference type="ChEBI" id="CHEBI:57540"/>
    </ligand>
</feature>
<feature type="binding site" evidence="1">
    <location>
        <position position="95"/>
    </location>
    <ligand>
        <name>NAD(+)</name>
        <dbReference type="ChEBI" id="CHEBI:57540"/>
    </ligand>
</feature>
<feature type="binding site" evidence="1">
    <location>
        <position position="239"/>
    </location>
    <ligand>
        <name>NAD(+)</name>
        <dbReference type="ChEBI" id="CHEBI:57540"/>
    </ligand>
</feature>
<proteinExistence type="inferred from homology"/>
<dbReference type="EC" id="1.1.-.-"/>
<dbReference type="EMBL" id="D83967">
    <property type="protein sequence ID" value="BAA23388.1"/>
    <property type="status" value="ALT_INIT"/>
    <property type="molecule type" value="Genomic_DNA"/>
</dbReference>
<dbReference type="EMBL" id="D78509">
    <property type="protein sequence ID" value="BAA24303.1"/>
    <property type="status" value="ALT_INIT"/>
    <property type="molecule type" value="Genomic_DNA"/>
</dbReference>
<dbReference type="EMBL" id="AL009126">
    <property type="protein sequence ID" value="CAB12628.2"/>
    <property type="molecule type" value="Genomic_DNA"/>
</dbReference>
<dbReference type="PIR" id="A69807">
    <property type="entry name" value="A69807"/>
</dbReference>
<dbReference type="RefSeq" id="NP_388680.2">
    <property type="nucleotide sequence ID" value="NC_000964.3"/>
</dbReference>
<dbReference type="RefSeq" id="WP_003243106.1">
    <property type="nucleotide sequence ID" value="NZ_OZ025638.1"/>
</dbReference>
<dbReference type="SMR" id="O34969"/>
<dbReference type="FunCoup" id="O34969">
    <property type="interactions" value="362"/>
</dbReference>
<dbReference type="STRING" id="224308.BSU07990"/>
<dbReference type="PaxDb" id="224308-BSU07990"/>
<dbReference type="EnsemblBacteria" id="CAB12628">
    <property type="protein sequence ID" value="CAB12628"/>
    <property type="gene ID" value="BSU_07990"/>
</dbReference>
<dbReference type="GeneID" id="939198"/>
<dbReference type="KEGG" id="bsu:BSU07990"/>
<dbReference type="PATRIC" id="fig|224308.179.peg.864"/>
<dbReference type="eggNOG" id="COG2084">
    <property type="taxonomic scope" value="Bacteria"/>
</dbReference>
<dbReference type="InParanoid" id="O34969"/>
<dbReference type="OrthoDB" id="9786703at2"/>
<dbReference type="PhylomeDB" id="O34969"/>
<dbReference type="BioCyc" id="BSUB:BSU07990-MONOMER"/>
<dbReference type="Proteomes" id="UP000001570">
    <property type="component" value="Chromosome"/>
</dbReference>
<dbReference type="GO" id="GO:0051287">
    <property type="term" value="F:NAD binding"/>
    <property type="evidence" value="ECO:0007669"/>
    <property type="project" value="InterPro"/>
</dbReference>
<dbReference type="GO" id="GO:0050661">
    <property type="term" value="F:NADP binding"/>
    <property type="evidence" value="ECO:0007669"/>
    <property type="project" value="InterPro"/>
</dbReference>
<dbReference type="GO" id="GO:0016491">
    <property type="term" value="F:oxidoreductase activity"/>
    <property type="evidence" value="ECO:0007669"/>
    <property type="project" value="UniProtKB-KW"/>
</dbReference>
<dbReference type="GO" id="GO:0016054">
    <property type="term" value="P:organic acid catabolic process"/>
    <property type="evidence" value="ECO:0007669"/>
    <property type="project" value="UniProtKB-ARBA"/>
</dbReference>
<dbReference type="Gene3D" id="1.10.1040.10">
    <property type="entry name" value="N-(1-d-carboxylethyl)-l-norvaline Dehydrogenase, domain 2"/>
    <property type="match status" value="1"/>
</dbReference>
<dbReference type="Gene3D" id="3.40.50.720">
    <property type="entry name" value="NAD(P)-binding Rossmann-like Domain"/>
    <property type="match status" value="1"/>
</dbReference>
<dbReference type="InterPro" id="IPR008927">
    <property type="entry name" value="6-PGluconate_DH-like_C_sf"/>
</dbReference>
<dbReference type="InterPro" id="IPR013328">
    <property type="entry name" value="6PGD_dom2"/>
</dbReference>
<dbReference type="InterPro" id="IPR006115">
    <property type="entry name" value="6PGDH_NADP-bd"/>
</dbReference>
<dbReference type="InterPro" id="IPR029154">
    <property type="entry name" value="HIBADH-like_NADP-bd"/>
</dbReference>
<dbReference type="InterPro" id="IPR015815">
    <property type="entry name" value="HIBADH-related"/>
</dbReference>
<dbReference type="InterPro" id="IPR051265">
    <property type="entry name" value="HIBADH-related_NP60_sf"/>
</dbReference>
<dbReference type="InterPro" id="IPR036291">
    <property type="entry name" value="NAD(P)-bd_dom_sf"/>
</dbReference>
<dbReference type="PANTHER" id="PTHR43580:SF2">
    <property type="entry name" value="CYTOKINE-LIKE NUCLEAR FACTOR N-PAC"/>
    <property type="match status" value="1"/>
</dbReference>
<dbReference type="PANTHER" id="PTHR43580">
    <property type="entry name" value="OXIDOREDUCTASE GLYR1-RELATED"/>
    <property type="match status" value="1"/>
</dbReference>
<dbReference type="Pfam" id="PF14833">
    <property type="entry name" value="NAD_binding_11"/>
    <property type="match status" value="1"/>
</dbReference>
<dbReference type="Pfam" id="PF03446">
    <property type="entry name" value="NAD_binding_2"/>
    <property type="match status" value="1"/>
</dbReference>
<dbReference type="PIRSF" id="PIRSF000103">
    <property type="entry name" value="HIBADH"/>
    <property type="match status" value="1"/>
</dbReference>
<dbReference type="SUPFAM" id="SSF48179">
    <property type="entry name" value="6-phosphogluconate dehydrogenase C-terminal domain-like"/>
    <property type="match status" value="1"/>
</dbReference>
<dbReference type="SUPFAM" id="SSF51735">
    <property type="entry name" value="NAD(P)-binding Rossmann-fold domains"/>
    <property type="match status" value="1"/>
</dbReference>
<sequence length="286" mass="30474">MKIAVIGLGNMGQPIARNVLQAGYELTVYNRTKQKTEDLVTEGAQAADTPRLAAKSADIVITMLADDDSVSTVTFGEDGLLEGLAENGIHISMSTISVEFSEKLAAAHAEKGQFFLAAPVLGRPDAAAKAALRIITAGPAEAKQAAKPLLDSLSQQIFDVGEESKTANAAKISINFLLVSMLEALSESFLMMEKYGLEQKQFLEIASALFGSPVYQNYGTIMAEQKFEPAGFKMSLGLKDTNLALAAAKRVSANLPLAELAKSHFESGIEKGFGDLDWAALIKCIK</sequence>
<name>YFJR_BACSU</name>
<gene>
    <name type="primary">yfjR</name>
    <name type="ordered locus">BSU07990</name>
</gene>
<organism>
    <name type="scientific">Bacillus subtilis (strain 168)</name>
    <dbReference type="NCBI Taxonomy" id="224308"/>
    <lineage>
        <taxon>Bacteria</taxon>
        <taxon>Bacillati</taxon>
        <taxon>Bacillota</taxon>
        <taxon>Bacilli</taxon>
        <taxon>Bacillales</taxon>
        <taxon>Bacillaceae</taxon>
        <taxon>Bacillus</taxon>
    </lineage>
</organism>
<protein>
    <recommendedName>
        <fullName>Uncharacterized oxidoreductase YfjR</fullName>
        <ecNumber>1.1.-.-</ecNumber>
    </recommendedName>
</protein>
<keyword id="KW-0520">NAD</keyword>
<keyword id="KW-0560">Oxidoreductase</keyword>
<keyword id="KW-1185">Reference proteome</keyword>
<evidence type="ECO:0000250" key="1"/>
<evidence type="ECO:0000305" key="2"/>
<reference key="1">
    <citation type="journal article" date="1996" name="Microbiology">
        <title>Cloning and sequencing of a 40.6 kb segment in the 73 degrees-76 degrees region of the Bacillus subtilis chromosome containing genes for trehalose metabolism and acetoin utilization.</title>
        <authorList>
            <person name="Yamamoto H."/>
            <person name="Uchiyama S."/>
            <person name="Sekiguchi J."/>
        </authorList>
    </citation>
    <scope>NUCLEOTIDE SEQUENCE [GENOMIC DNA]</scope>
    <source>
        <strain>168 / AC327</strain>
    </source>
</reference>
<reference key="2">
    <citation type="journal article" date="1997" name="Nature">
        <title>The complete genome sequence of the Gram-positive bacterium Bacillus subtilis.</title>
        <authorList>
            <person name="Kunst F."/>
            <person name="Ogasawara N."/>
            <person name="Moszer I."/>
            <person name="Albertini A.M."/>
            <person name="Alloni G."/>
            <person name="Azevedo V."/>
            <person name="Bertero M.G."/>
            <person name="Bessieres P."/>
            <person name="Bolotin A."/>
            <person name="Borchert S."/>
            <person name="Borriss R."/>
            <person name="Boursier L."/>
            <person name="Brans A."/>
            <person name="Braun M."/>
            <person name="Brignell S.C."/>
            <person name="Bron S."/>
            <person name="Brouillet S."/>
            <person name="Bruschi C.V."/>
            <person name="Caldwell B."/>
            <person name="Capuano V."/>
            <person name="Carter N.M."/>
            <person name="Choi S.-K."/>
            <person name="Codani J.-J."/>
            <person name="Connerton I.F."/>
            <person name="Cummings N.J."/>
            <person name="Daniel R.A."/>
            <person name="Denizot F."/>
            <person name="Devine K.M."/>
            <person name="Duesterhoeft A."/>
            <person name="Ehrlich S.D."/>
            <person name="Emmerson P.T."/>
            <person name="Entian K.-D."/>
            <person name="Errington J."/>
            <person name="Fabret C."/>
            <person name="Ferrari E."/>
            <person name="Foulger D."/>
            <person name="Fritz C."/>
            <person name="Fujita M."/>
            <person name="Fujita Y."/>
            <person name="Fuma S."/>
            <person name="Galizzi A."/>
            <person name="Galleron N."/>
            <person name="Ghim S.-Y."/>
            <person name="Glaser P."/>
            <person name="Goffeau A."/>
            <person name="Golightly E.J."/>
            <person name="Grandi G."/>
            <person name="Guiseppi G."/>
            <person name="Guy B.J."/>
            <person name="Haga K."/>
            <person name="Haiech J."/>
            <person name="Harwood C.R."/>
            <person name="Henaut A."/>
            <person name="Hilbert H."/>
            <person name="Holsappel S."/>
            <person name="Hosono S."/>
            <person name="Hullo M.-F."/>
            <person name="Itaya M."/>
            <person name="Jones L.-M."/>
            <person name="Joris B."/>
            <person name="Karamata D."/>
            <person name="Kasahara Y."/>
            <person name="Klaerr-Blanchard M."/>
            <person name="Klein C."/>
            <person name="Kobayashi Y."/>
            <person name="Koetter P."/>
            <person name="Koningstein G."/>
            <person name="Krogh S."/>
            <person name="Kumano M."/>
            <person name="Kurita K."/>
            <person name="Lapidus A."/>
            <person name="Lardinois S."/>
            <person name="Lauber J."/>
            <person name="Lazarevic V."/>
            <person name="Lee S.-M."/>
            <person name="Levine A."/>
            <person name="Liu H."/>
            <person name="Masuda S."/>
            <person name="Mauel C."/>
            <person name="Medigue C."/>
            <person name="Medina N."/>
            <person name="Mellado R.P."/>
            <person name="Mizuno M."/>
            <person name="Moestl D."/>
            <person name="Nakai S."/>
            <person name="Noback M."/>
            <person name="Noone D."/>
            <person name="O'Reilly M."/>
            <person name="Ogawa K."/>
            <person name="Ogiwara A."/>
            <person name="Oudega B."/>
            <person name="Park S.-H."/>
            <person name="Parro V."/>
            <person name="Pohl T.M."/>
            <person name="Portetelle D."/>
            <person name="Porwollik S."/>
            <person name="Prescott A.M."/>
            <person name="Presecan E."/>
            <person name="Pujic P."/>
            <person name="Purnelle B."/>
            <person name="Rapoport G."/>
            <person name="Rey M."/>
            <person name="Reynolds S."/>
            <person name="Rieger M."/>
            <person name="Rivolta C."/>
            <person name="Rocha E."/>
            <person name="Roche B."/>
            <person name="Rose M."/>
            <person name="Sadaie Y."/>
            <person name="Sato T."/>
            <person name="Scanlan E."/>
            <person name="Schleich S."/>
            <person name="Schroeter R."/>
            <person name="Scoffone F."/>
            <person name="Sekiguchi J."/>
            <person name="Sekowska A."/>
            <person name="Seror S.J."/>
            <person name="Serror P."/>
            <person name="Shin B.-S."/>
            <person name="Soldo B."/>
            <person name="Sorokin A."/>
            <person name="Tacconi E."/>
            <person name="Takagi T."/>
            <person name="Takahashi H."/>
            <person name="Takemaru K."/>
            <person name="Takeuchi M."/>
            <person name="Tamakoshi A."/>
            <person name="Tanaka T."/>
            <person name="Terpstra P."/>
            <person name="Tognoni A."/>
            <person name="Tosato V."/>
            <person name="Uchiyama S."/>
            <person name="Vandenbol M."/>
            <person name="Vannier F."/>
            <person name="Vassarotti A."/>
            <person name="Viari A."/>
            <person name="Wambutt R."/>
            <person name="Wedler E."/>
            <person name="Wedler H."/>
            <person name="Weitzenegger T."/>
            <person name="Winters P."/>
            <person name="Wipat A."/>
            <person name="Yamamoto H."/>
            <person name="Yamane K."/>
            <person name="Yasumoto K."/>
            <person name="Yata K."/>
            <person name="Yoshida K."/>
            <person name="Yoshikawa H.-F."/>
            <person name="Zumstein E."/>
            <person name="Yoshikawa H."/>
            <person name="Danchin A."/>
        </authorList>
    </citation>
    <scope>NUCLEOTIDE SEQUENCE [LARGE SCALE GENOMIC DNA]</scope>
    <source>
        <strain>168</strain>
    </source>
</reference>
<accession>O34969</accession>